<reference key="1">
    <citation type="journal article" date="2002" name="Proc. Natl. Acad. Sci. U.S.A.">
        <title>Genome sequence and comparative microarray analysis of serotype M18 group A Streptococcus strains associated with acute rheumatic fever outbreaks.</title>
        <authorList>
            <person name="Smoot J.C."/>
            <person name="Barbian K.D."/>
            <person name="Van Gompel J.J."/>
            <person name="Smoot L.M."/>
            <person name="Chaussee M.S."/>
            <person name="Sylva G.L."/>
            <person name="Sturdevant D.E."/>
            <person name="Ricklefs S.M."/>
            <person name="Porcella S.F."/>
            <person name="Parkins L.D."/>
            <person name="Beres S.B."/>
            <person name="Campbell D.S."/>
            <person name="Smith T.M."/>
            <person name="Zhang Q."/>
            <person name="Kapur V."/>
            <person name="Daly J.A."/>
            <person name="Veasy L.G."/>
            <person name="Musser J.M."/>
        </authorList>
    </citation>
    <scope>NUCLEOTIDE SEQUENCE [LARGE SCALE GENOMIC DNA]</scope>
    <source>
        <strain>MGAS8232</strain>
    </source>
</reference>
<gene>
    <name evidence="1" type="primary">gpmA</name>
    <name type="ordered locus">spyM18_1439</name>
</gene>
<name>GPMA_STRP8</name>
<protein>
    <recommendedName>
        <fullName evidence="1">2,3-bisphosphoglycerate-dependent phosphoglycerate mutase</fullName>
        <shortName evidence="1">BPG-dependent PGAM</shortName>
        <shortName evidence="1">PGAM</shortName>
        <shortName evidence="1">Phosphoglyceromutase</shortName>
        <shortName evidence="1">dPGM</shortName>
        <ecNumber evidence="1">5.4.2.11</ecNumber>
    </recommendedName>
</protein>
<feature type="chain" id="PRO_0000179930" description="2,3-bisphosphoglycerate-dependent phosphoglycerate mutase">
    <location>
        <begin position="1"/>
        <end position="231"/>
    </location>
</feature>
<feature type="active site" description="Tele-phosphohistidine intermediate" evidence="1">
    <location>
        <position position="9"/>
    </location>
</feature>
<feature type="active site" description="Proton donor/acceptor" evidence="1">
    <location>
        <position position="87"/>
    </location>
</feature>
<feature type="binding site" evidence="1">
    <location>
        <begin position="8"/>
        <end position="15"/>
    </location>
    <ligand>
        <name>substrate</name>
    </ligand>
</feature>
<feature type="binding site" evidence="1">
    <location>
        <begin position="21"/>
        <end position="22"/>
    </location>
    <ligand>
        <name>substrate</name>
    </ligand>
</feature>
<feature type="binding site" evidence="1">
    <location>
        <position position="60"/>
    </location>
    <ligand>
        <name>substrate</name>
    </ligand>
</feature>
<feature type="binding site" evidence="1">
    <location>
        <begin position="87"/>
        <end position="90"/>
    </location>
    <ligand>
        <name>substrate</name>
    </ligand>
</feature>
<feature type="binding site" evidence="1">
    <location>
        <position position="98"/>
    </location>
    <ligand>
        <name>substrate</name>
    </ligand>
</feature>
<feature type="binding site" evidence="1">
    <location>
        <begin position="114"/>
        <end position="115"/>
    </location>
    <ligand>
        <name>substrate</name>
    </ligand>
</feature>
<feature type="binding site" evidence="1">
    <location>
        <begin position="183"/>
        <end position="184"/>
    </location>
    <ligand>
        <name>substrate</name>
    </ligand>
</feature>
<feature type="site" description="Transition state stabilizer" evidence="1">
    <location>
        <position position="182"/>
    </location>
</feature>
<proteinExistence type="inferred from homology"/>
<comment type="function">
    <text evidence="1">Catalyzes the interconversion of 2-phosphoglycerate and 3-phosphoglycerate.</text>
</comment>
<comment type="catalytic activity">
    <reaction evidence="1">
        <text>(2R)-2-phosphoglycerate = (2R)-3-phosphoglycerate</text>
        <dbReference type="Rhea" id="RHEA:15901"/>
        <dbReference type="ChEBI" id="CHEBI:58272"/>
        <dbReference type="ChEBI" id="CHEBI:58289"/>
        <dbReference type="EC" id="5.4.2.11"/>
    </reaction>
</comment>
<comment type="pathway">
    <text evidence="1">Carbohydrate degradation; glycolysis; pyruvate from D-glyceraldehyde 3-phosphate: step 3/5.</text>
</comment>
<comment type="similarity">
    <text evidence="1">Belongs to the phosphoglycerate mutase family. BPG-dependent PGAM subfamily.</text>
</comment>
<organism>
    <name type="scientific">Streptococcus pyogenes serotype M18 (strain MGAS8232)</name>
    <dbReference type="NCBI Taxonomy" id="186103"/>
    <lineage>
        <taxon>Bacteria</taxon>
        <taxon>Bacillati</taxon>
        <taxon>Bacillota</taxon>
        <taxon>Bacilli</taxon>
        <taxon>Lactobacillales</taxon>
        <taxon>Streptococcaceae</taxon>
        <taxon>Streptococcus</taxon>
    </lineage>
</organism>
<dbReference type="EC" id="5.4.2.11" evidence="1"/>
<dbReference type="EMBL" id="AE009949">
    <property type="protein sequence ID" value="AAL98019.1"/>
    <property type="molecule type" value="Genomic_DNA"/>
</dbReference>
<dbReference type="RefSeq" id="WP_002983928.1">
    <property type="nucleotide sequence ID" value="NC_003485.1"/>
</dbReference>
<dbReference type="SMR" id="P65711"/>
<dbReference type="KEGG" id="spm:spyM18_1439"/>
<dbReference type="HOGENOM" id="CLU_033323_1_5_9"/>
<dbReference type="UniPathway" id="UPA00109">
    <property type="reaction ID" value="UER00186"/>
</dbReference>
<dbReference type="GO" id="GO:0004619">
    <property type="term" value="F:phosphoglycerate mutase activity"/>
    <property type="evidence" value="ECO:0007669"/>
    <property type="project" value="UniProtKB-EC"/>
</dbReference>
<dbReference type="GO" id="GO:0006094">
    <property type="term" value="P:gluconeogenesis"/>
    <property type="evidence" value="ECO:0007669"/>
    <property type="project" value="UniProtKB-UniRule"/>
</dbReference>
<dbReference type="GO" id="GO:0006096">
    <property type="term" value="P:glycolytic process"/>
    <property type="evidence" value="ECO:0007669"/>
    <property type="project" value="UniProtKB-UniRule"/>
</dbReference>
<dbReference type="CDD" id="cd07067">
    <property type="entry name" value="HP_PGM_like"/>
    <property type="match status" value="1"/>
</dbReference>
<dbReference type="FunFam" id="3.40.50.1240:FF:000003">
    <property type="entry name" value="2,3-bisphosphoglycerate-dependent phosphoglycerate mutase"/>
    <property type="match status" value="1"/>
</dbReference>
<dbReference type="Gene3D" id="3.40.50.1240">
    <property type="entry name" value="Phosphoglycerate mutase-like"/>
    <property type="match status" value="1"/>
</dbReference>
<dbReference type="HAMAP" id="MF_01039">
    <property type="entry name" value="PGAM_GpmA"/>
    <property type="match status" value="1"/>
</dbReference>
<dbReference type="InterPro" id="IPR013078">
    <property type="entry name" value="His_Pase_superF_clade-1"/>
</dbReference>
<dbReference type="InterPro" id="IPR029033">
    <property type="entry name" value="His_PPase_superfam"/>
</dbReference>
<dbReference type="InterPro" id="IPR005952">
    <property type="entry name" value="Phosphogly_mut1"/>
</dbReference>
<dbReference type="NCBIfam" id="TIGR01258">
    <property type="entry name" value="pgm_1"/>
    <property type="match status" value="1"/>
</dbReference>
<dbReference type="NCBIfam" id="NF010713">
    <property type="entry name" value="PRK14115.1"/>
    <property type="match status" value="1"/>
</dbReference>
<dbReference type="NCBIfam" id="NF010715">
    <property type="entry name" value="PRK14117.1"/>
    <property type="match status" value="1"/>
</dbReference>
<dbReference type="PANTHER" id="PTHR11931">
    <property type="entry name" value="PHOSPHOGLYCERATE MUTASE"/>
    <property type="match status" value="1"/>
</dbReference>
<dbReference type="Pfam" id="PF00300">
    <property type="entry name" value="His_Phos_1"/>
    <property type="match status" value="1"/>
</dbReference>
<dbReference type="PIRSF" id="PIRSF000709">
    <property type="entry name" value="6PFK_2-Ptase"/>
    <property type="match status" value="1"/>
</dbReference>
<dbReference type="SMART" id="SM00855">
    <property type="entry name" value="PGAM"/>
    <property type="match status" value="1"/>
</dbReference>
<dbReference type="SUPFAM" id="SSF53254">
    <property type="entry name" value="Phosphoglycerate mutase-like"/>
    <property type="match status" value="1"/>
</dbReference>
<evidence type="ECO:0000255" key="1">
    <source>
        <dbReference type="HAMAP-Rule" id="MF_01039"/>
    </source>
</evidence>
<keyword id="KW-0312">Gluconeogenesis</keyword>
<keyword id="KW-0324">Glycolysis</keyword>
<keyword id="KW-0413">Isomerase</keyword>
<sequence>MVKLVFARHGESEWNKANLFTGWADVDLSEKGTQQAIDAGKLIKEAGIEFDLAFTSVLTRAIKTTNLALENAGQLWVPTEKSWRLNERHYGALTGKNKAEAAEQFGDEQVHIWRRSYDVLPPAMAKDDEYSAHKDRRYADLDPALIPDAENLKVTLERAMPYWEEKIAPALLDGKNVFVGAHGNSIRALVKHIKGLSDDEIMDVEIPNFPPLVFELDEKLNIVKEYYLGGE</sequence>
<accession>P65711</accession>
<accession>Q8P0C1</accession>